<proteinExistence type="inferred from homology"/>
<gene>
    <name evidence="1" type="primary">lepA</name>
    <name type="ordered locus">LSEI_1562</name>
</gene>
<dbReference type="EC" id="3.6.5.n1" evidence="1"/>
<dbReference type="EMBL" id="CP000423">
    <property type="protein sequence ID" value="ABJ70336.1"/>
    <property type="molecule type" value="Genomic_DNA"/>
</dbReference>
<dbReference type="RefSeq" id="WP_003575274.1">
    <property type="nucleotide sequence ID" value="NC_008526.1"/>
</dbReference>
<dbReference type="RefSeq" id="YP_806778.1">
    <property type="nucleotide sequence ID" value="NC_008526.1"/>
</dbReference>
<dbReference type="SMR" id="Q038N6"/>
<dbReference type="STRING" id="321967.LSEI_1562"/>
<dbReference type="PaxDb" id="321967-LSEI_1562"/>
<dbReference type="KEGG" id="lca:LSEI_1562"/>
<dbReference type="PATRIC" id="fig|321967.11.peg.1543"/>
<dbReference type="HOGENOM" id="CLU_009995_3_3_9"/>
<dbReference type="Proteomes" id="UP000001651">
    <property type="component" value="Chromosome"/>
</dbReference>
<dbReference type="GO" id="GO:0005886">
    <property type="term" value="C:plasma membrane"/>
    <property type="evidence" value="ECO:0007669"/>
    <property type="project" value="UniProtKB-SubCell"/>
</dbReference>
<dbReference type="GO" id="GO:0005525">
    <property type="term" value="F:GTP binding"/>
    <property type="evidence" value="ECO:0007669"/>
    <property type="project" value="UniProtKB-UniRule"/>
</dbReference>
<dbReference type="GO" id="GO:0003924">
    <property type="term" value="F:GTPase activity"/>
    <property type="evidence" value="ECO:0007669"/>
    <property type="project" value="UniProtKB-UniRule"/>
</dbReference>
<dbReference type="GO" id="GO:0043022">
    <property type="term" value="F:ribosome binding"/>
    <property type="evidence" value="ECO:0007669"/>
    <property type="project" value="UniProtKB-UniRule"/>
</dbReference>
<dbReference type="GO" id="GO:0003746">
    <property type="term" value="F:translation elongation factor activity"/>
    <property type="evidence" value="ECO:0007669"/>
    <property type="project" value="UniProtKB-UniRule"/>
</dbReference>
<dbReference type="GO" id="GO:0045727">
    <property type="term" value="P:positive regulation of translation"/>
    <property type="evidence" value="ECO:0007669"/>
    <property type="project" value="UniProtKB-UniRule"/>
</dbReference>
<dbReference type="CDD" id="cd03699">
    <property type="entry name" value="EF4_II"/>
    <property type="match status" value="1"/>
</dbReference>
<dbReference type="CDD" id="cd16260">
    <property type="entry name" value="EF4_III"/>
    <property type="match status" value="1"/>
</dbReference>
<dbReference type="CDD" id="cd01890">
    <property type="entry name" value="LepA"/>
    <property type="match status" value="1"/>
</dbReference>
<dbReference type="CDD" id="cd03709">
    <property type="entry name" value="lepA_C"/>
    <property type="match status" value="1"/>
</dbReference>
<dbReference type="FunFam" id="3.40.50.300:FF:000078">
    <property type="entry name" value="Elongation factor 4"/>
    <property type="match status" value="1"/>
</dbReference>
<dbReference type="FunFam" id="2.40.30.10:FF:000015">
    <property type="entry name" value="Translation factor GUF1, mitochondrial"/>
    <property type="match status" value="1"/>
</dbReference>
<dbReference type="FunFam" id="3.30.70.240:FF:000007">
    <property type="entry name" value="Translation factor GUF1, mitochondrial"/>
    <property type="match status" value="1"/>
</dbReference>
<dbReference type="FunFam" id="3.30.70.2570:FF:000001">
    <property type="entry name" value="Translation factor GUF1, mitochondrial"/>
    <property type="match status" value="1"/>
</dbReference>
<dbReference type="FunFam" id="3.30.70.870:FF:000004">
    <property type="entry name" value="Translation factor GUF1, mitochondrial"/>
    <property type="match status" value="1"/>
</dbReference>
<dbReference type="Gene3D" id="3.30.70.240">
    <property type="match status" value="1"/>
</dbReference>
<dbReference type="Gene3D" id="3.30.70.2570">
    <property type="entry name" value="Elongation factor 4, C-terminal domain"/>
    <property type="match status" value="1"/>
</dbReference>
<dbReference type="Gene3D" id="3.30.70.870">
    <property type="entry name" value="Elongation Factor G (Translational Gtpase), domain 3"/>
    <property type="match status" value="1"/>
</dbReference>
<dbReference type="Gene3D" id="3.40.50.300">
    <property type="entry name" value="P-loop containing nucleotide triphosphate hydrolases"/>
    <property type="match status" value="1"/>
</dbReference>
<dbReference type="Gene3D" id="2.40.30.10">
    <property type="entry name" value="Translation factors"/>
    <property type="match status" value="1"/>
</dbReference>
<dbReference type="HAMAP" id="MF_00071">
    <property type="entry name" value="LepA"/>
    <property type="match status" value="1"/>
</dbReference>
<dbReference type="InterPro" id="IPR006297">
    <property type="entry name" value="EF-4"/>
</dbReference>
<dbReference type="InterPro" id="IPR035647">
    <property type="entry name" value="EFG_III/V"/>
</dbReference>
<dbReference type="InterPro" id="IPR000640">
    <property type="entry name" value="EFG_V-like"/>
</dbReference>
<dbReference type="InterPro" id="IPR004161">
    <property type="entry name" value="EFTu-like_2"/>
</dbReference>
<dbReference type="InterPro" id="IPR038363">
    <property type="entry name" value="LepA_C_sf"/>
</dbReference>
<dbReference type="InterPro" id="IPR013842">
    <property type="entry name" value="LepA_CTD"/>
</dbReference>
<dbReference type="InterPro" id="IPR035654">
    <property type="entry name" value="LepA_IV"/>
</dbReference>
<dbReference type="InterPro" id="IPR027417">
    <property type="entry name" value="P-loop_NTPase"/>
</dbReference>
<dbReference type="InterPro" id="IPR005225">
    <property type="entry name" value="Small_GTP-bd"/>
</dbReference>
<dbReference type="InterPro" id="IPR000795">
    <property type="entry name" value="T_Tr_GTP-bd_dom"/>
</dbReference>
<dbReference type="NCBIfam" id="TIGR01393">
    <property type="entry name" value="lepA"/>
    <property type="match status" value="1"/>
</dbReference>
<dbReference type="NCBIfam" id="TIGR00231">
    <property type="entry name" value="small_GTP"/>
    <property type="match status" value="1"/>
</dbReference>
<dbReference type="PANTHER" id="PTHR43512:SF4">
    <property type="entry name" value="TRANSLATION FACTOR GUF1 HOMOLOG, CHLOROPLASTIC"/>
    <property type="match status" value="1"/>
</dbReference>
<dbReference type="PANTHER" id="PTHR43512">
    <property type="entry name" value="TRANSLATION FACTOR GUF1-RELATED"/>
    <property type="match status" value="1"/>
</dbReference>
<dbReference type="Pfam" id="PF00679">
    <property type="entry name" value="EFG_C"/>
    <property type="match status" value="1"/>
</dbReference>
<dbReference type="Pfam" id="PF00009">
    <property type="entry name" value="GTP_EFTU"/>
    <property type="match status" value="1"/>
</dbReference>
<dbReference type="Pfam" id="PF03144">
    <property type="entry name" value="GTP_EFTU_D2"/>
    <property type="match status" value="1"/>
</dbReference>
<dbReference type="Pfam" id="PF06421">
    <property type="entry name" value="LepA_C"/>
    <property type="match status" value="1"/>
</dbReference>
<dbReference type="PRINTS" id="PR00315">
    <property type="entry name" value="ELONGATNFCT"/>
</dbReference>
<dbReference type="SMART" id="SM00838">
    <property type="entry name" value="EFG_C"/>
    <property type="match status" value="1"/>
</dbReference>
<dbReference type="SUPFAM" id="SSF54980">
    <property type="entry name" value="EF-G C-terminal domain-like"/>
    <property type="match status" value="2"/>
</dbReference>
<dbReference type="SUPFAM" id="SSF52540">
    <property type="entry name" value="P-loop containing nucleoside triphosphate hydrolases"/>
    <property type="match status" value="1"/>
</dbReference>
<dbReference type="PROSITE" id="PS51722">
    <property type="entry name" value="G_TR_2"/>
    <property type="match status" value="1"/>
</dbReference>
<evidence type="ECO:0000255" key="1">
    <source>
        <dbReference type="HAMAP-Rule" id="MF_00071"/>
    </source>
</evidence>
<sequence length="612" mass="68392">MNQEEMLDRQKHIRNFSIIAHIDHGKSTLADRILELTDTIAKRDMQAQVLDDMALERERGITIKLNAVELHYKAKNGETYIFHLIDTPGHVDFSYEVSRSLAACEGALLVVDATQGVEAQTLANVYLAIDDDLEIIPVINKVDLPSAQPDVVKEEIEEMIGLDASDAILASGKTGLGVPEILERIVTDVPAPSGDLNAPLQALIFDSVYDDYRGVVLDVRVKEGQVKVGDTIQLMSNGKQFQVTEVGVMSPKAVKRDFLMVGDVGYITAAIKTIQDTRVGDTVTLADRPAEKPLKGYRKITPMVYSGLFPVDNAKFNDLREALEKLQLNDAALEFEPETSQALGFGFRCGFLGLLHMDVVQERLERDYDLDLIMTAPSVDYEIIMTDGTEKTIDNPADMPEVSEIKEIREPYVKASIMVPNDYVGPVMELSQRKRGEFVTMDYLDKYRVNVIYNLPLSEIIYDFFDDLKSSTKGYASLDYEITGYRQSDLVKMDILLNGDPVDALSTIVHKDFAYERGKAIVARLKTTIPRQQFEIPIQAAIGNKVIARSTVKAYRKNVLAKCYGGDITRKRKLLEKQKAGKKRMKSVGSVEVPQEAFMSILKMNDEESQGK</sequence>
<keyword id="KW-1003">Cell membrane</keyword>
<keyword id="KW-0342">GTP-binding</keyword>
<keyword id="KW-0378">Hydrolase</keyword>
<keyword id="KW-0472">Membrane</keyword>
<keyword id="KW-0547">Nucleotide-binding</keyword>
<keyword id="KW-0648">Protein biosynthesis</keyword>
<keyword id="KW-1185">Reference proteome</keyword>
<feature type="chain" id="PRO_1000032009" description="Elongation factor 4">
    <location>
        <begin position="1"/>
        <end position="612"/>
    </location>
</feature>
<feature type="domain" description="tr-type G">
    <location>
        <begin position="11"/>
        <end position="193"/>
    </location>
</feature>
<feature type="binding site" evidence="1">
    <location>
        <begin position="23"/>
        <end position="28"/>
    </location>
    <ligand>
        <name>GTP</name>
        <dbReference type="ChEBI" id="CHEBI:37565"/>
    </ligand>
</feature>
<feature type="binding site" evidence="1">
    <location>
        <begin position="140"/>
        <end position="143"/>
    </location>
    <ligand>
        <name>GTP</name>
        <dbReference type="ChEBI" id="CHEBI:37565"/>
    </ligand>
</feature>
<reference key="1">
    <citation type="journal article" date="2006" name="Proc. Natl. Acad. Sci. U.S.A.">
        <title>Comparative genomics of the lactic acid bacteria.</title>
        <authorList>
            <person name="Makarova K.S."/>
            <person name="Slesarev A."/>
            <person name="Wolf Y.I."/>
            <person name="Sorokin A."/>
            <person name="Mirkin B."/>
            <person name="Koonin E.V."/>
            <person name="Pavlov A."/>
            <person name="Pavlova N."/>
            <person name="Karamychev V."/>
            <person name="Polouchine N."/>
            <person name="Shakhova V."/>
            <person name="Grigoriev I."/>
            <person name="Lou Y."/>
            <person name="Rohksar D."/>
            <person name="Lucas S."/>
            <person name="Huang K."/>
            <person name="Goodstein D.M."/>
            <person name="Hawkins T."/>
            <person name="Plengvidhya V."/>
            <person name="Welker D."/>
            <person name="Hughes J."/>
            <person name="Goh Y."/>
            <person name="Benson A."/>
            <person name="Baldwin K."/>
            <person name="Lee J.-H."/>
            <person name="Diaz-Muniz I."/>
            <person name="Dosti B."/>
            <person name="Smeianov V."/>
            <person name="Wechter W."/>
            <person name="Barabote R."/>
            <person name="Lorca G."/>
            <person name="Altermann E."/>
            <person name="Barrangou R."/>
            <person name="Ganesan B."/>
            <person name="Xie Y."/>
            <person name="Rawsthorne H."/>
            <person name="Tamir D."/>
            <person name="Parker C."/>
            <person name="Breidt F."/>
            <person name="Broadbent J.R."/>
            <person name="Hutkins R."/>
            <person name="O'Sullivan D."/>
            <person name="Steele J."/>
            <person name="Unlu G."/>
            <person name="Saier M.H. Jr."/>
            <person name="Klaenhammer T."/>
            <person name="Richardson P."/>
            <person name="Kozyavkin S."/>
            <person name="Weimer B.C."/>
            <person name="Mills D.A."/>
        </authorList>
    </citation>
    <scope>NUCLEOTIDE SEQUENCE [LARGE SCALE GENOMIC DNA]</scope>
    <source>
        <strain>ATCC 334 / BCRC 17002 / CCUG 31169 / CIP 107868 / KCTC 3260 / NRRL B-441</strain>
    </source>
</reference>
<organism>
    <name type="scientific">Lacticaseibacillus paracasei (strain ATCC 334 / BCRC 17002 / CCUG 31169 / CIP 107868 / KCTC 3260 / NRRL B-441)</name>
    <name type="common">Lactobacillus paracasei</name>
    <dbReference type="NCBI Taxonomy" id="321967"/>
    <lineage>
        <taxon>Bacteria</taxon>
        <taxon>Bacillati</taxon>
        <taxon>Bacillota</taxon>
        <taxon>Bacilli</taxon>
        <taxon>Lactobacillales</taxon>
        <taxon>Lactobacillaceae</taxon>
        <taxon>Lacticaseibacillus</taxon>
    </lineage>
</organism>
<accession>Q038N6</accession>
<comment type="function">
    <text evidence="1">Required for accurate and efficient protein synthesis under certain stress conditions. May act as a fidelity factor of the translation reaction, by catalyzing a one-codon backward translocation of tRNAs on improperly translocated ribosomes. Back-translocation proceeds from a post-translocation (POST) complex to a pre-translocation (PRE) complex, thus giving elongation factor G a second chance to translocate the tRNAs correctly. Binds to ribosomes in a GTP-dependent manner.</text>
</comment>
<comment type="catalytic activity">
    <reaction evidence="1">
        <text>GTP + H2O = GDP + phosphate + H(+)</text>
        <dbReference type="Rhea" id="RHEA:19669"/>
        <dbReference type="ChEBI" id="CHEBI:15377"/>
        <dbReference type="ChEBI" id="CHEBI:15378"/>
        <dbReference type="ChEBI" id="CHEBI:37565"/>
        <dbReference type="ChEBI" id="CHEBI:43474"/>
        <dbReference type="ChEBI" id="CHEBI:58189"/>
        <dbReference type="EC" id="3.6.5.n1"/>
    </reaction>
</comment>
<comment type="subcellular location">
    <subcellularLocation>
        <location evidence="1">Cell membrane</location>
        <topology evidence="1">Peripheral membrane protein</topology>
        <orientation evidence="1">Cytoplasmic side</orientation>
    </subcellularLocation>
</comment>
<comment type="similarity">
    <text evidence="1">Belongs to the TRAFAC class translation factor GTPase superfamily. Classic translation factor GTPase family. LepA subfamily.</text>
</comment>
<protein>
    <recommendedName>
        <fullName evidence="1">Elongation factor 4</fullName>
        <shortName evidence="1">EF-4</shortName>
        <ecNumber evidence="1">3.6.5.n1</ecNumber>
    </recommendedName>
    <alternativeName>
        <fullName evidence="1">Ribosomal back-translocase LepA</fullName>
    </alternativeName>
</protein>
<name>LEPA_LACP3</name>